<keyword id="KW-0963">Cytoplasm</keyword>
<keyword id="KW-0269">Exonuclease</keyword>
<keyword id="KW-0378">Hydrolase</keyword>
<keyword id="KW-0540">Nuclease</keyword>
<organism>
    <name type="scientific">Chlamydia pneumoniae</name>
    <name type="common">Chlamydophila pneumoniae</name>
    <dbReference type="NCBI Taxonomy" id="83558"/>
    <lineage>
        <taxon>Bacteria</taxon>
        <taxon>Pseudomonadati</taxon>
        <taxon>Chlamydiota</taxon>
        <taxon>Chlamydiia</taxon>
        <taxon>Chlamydiales</taxon>
        <taxon>Chlamydiaceae</taxon>
        <taxon>Chlamydia/Chlamydophila group</taxon>
        <taxon>Chlamydia</taxon>
    </lineage>
</organism>
<protein>
    <recommendedName>
        <fullName evidence="1">Exodeoxyribonuclease 7 large subunit</fullName>
        <ecNumber evidence="1">3.1.11.6</ecNumber>
    </recommendedName>
    <alternativeName>
        <fullName evidence="1">Exodeoxyribonuclease VII large subunit</fullName>
        <shortName evidence="1">Exonuclease VII large subunit</shortName>
    </alternativeName>
</protein>
<reference key="1">
    <citation type="journal article" date="1999" name="Nat. Genet.">
        <title>Comparative genomes of Chlamydia pneumoniae and C. trachomatis.</title>
        <authorList>
            <person name="Kalman S."/>
            <person name="Mitchell W.P."/>
            <person name="Marathe R."/>
            <person name="Lammel C.J."/>
            <person name="Fan J."/>
            <person name="Hyman R.W."/>
            <person name="Olinger L."/>
            <person name="Grimwood J."/>
            <person name="Davis R.W."/>
            <person name="Stephens R.S."/>
        </authorList>
    </citation>
    <scope>NUCLEOTIDE SEQUENCE [LARGE SCALE GENOMIC DNA]</scope>
    <source>
        <strain>CWL029</strain>
    </source>
</reference>
<reference key="2">
    <citation type="journal article" date="2000" name="Nucleic Acids Res.">
        <title>Genome sequences of Chlamydia trachomatis MoPn and Chlamydia pneumoniae AR39.</title>
        <authorList>
            <person name="Read T.D."/>
            <person name="Brunham R.C."/>
            <person name="Shen C."/>
            <person name="Gill S.R."/>
            <person name="Heidelberg J.F."/>
            <person name="White O."/>
            <person name="Hickey E.K."/>
            <person name="Peterson J.D."/>
            <person name="Utterback T.R."/>
            <person name="Berry K.J."/>
            <person name="Bass S."/>
            <person name="Linher K.D."/>
            <person name="Weidman J.F."/>
            <person name="Khouri H.M."/>
            <person name="Craven B."/>
            <person name="Bowman C."/>
            <person name="Dodson R.J."/>
            <person name="Gwinn M.L."/>
            <person name="Nelson W.C."/>
            <person name="DeBoy R.T."/>
            <person name="Kolonay J.F."/>
            <person name="McClarty G."/>
            <person name="Salzberg S.L."/>
            <person name="Eisen J.A."/>
            <person name="Fraser C.M."/>
        </authorList>
    </citation>
    <scope>NUCLEOTIDE SEQUENCE [LARGE SCALE GENOMIC DNA]</scope>
    <source>
        <strain>AR39</strain>
    </source>
</reference>
<reference key="3">
    <citation type="journal article" date="2000" name="Nucleic Acids Res.">
        <title>Comparison of whole genome sequences of Chlamydia pneumoniae J138 from Japan and CWL029 from USA.</title>
        <authorList>
            <person name="Shirai M."/>
            <person name="Hirakawa H."/>
            <person name="Kimoto M."/>
            <person name="Tabuchi M."/>
            <person name="Kishi F."/>
            <person name="Ouchi K."/>
            <person name="Shiba T."/>
            <person name="Ishii K."/>
            <person name="Hattori M."/>
            <person name="Kuhara S."/>
            <person name="Nakazawa T."/>
        </authorList>
    </citation>
    <scope>NUCLEOTIDE SEQUENCE [LARGE SCALE GENOMIC DNA]</scope>
    <source>
        <strain>J138</strain>
    </source>
</reference>
<reference key="4">
    <citation type="submission" date="2002-05" db="EMBL/GenBank/DDBJ databases">
        <title>The genome sequence of Chlamydia pneumoniae TW183 and comparison with other Chlamydia strains based on whole genome sequence analysis.</title>
        <authorList>
            <person name="Geng M.M."/>
            <person name="Schuhmacher A."/>
            <person name="Muehldorfer I."/>
            <person name="Bensch K.W."/>
            <person name="Schaefer K.P."/>
            <person name="Schneider S."/>
            <person name="Pohl T."/>
            <person name="Essig A."/>
            <person name="Marre R."/>
            <person name="Melchers K."/>
        </authorList>
    </citation>
    <scope>NUCLEOTIDE SEQUENCE [LARGE SCALE GENOMIC DNA]</scope>
    <source>
        <strain>TW-183</strain>
    </source>
</reference>
<comment type="function">
    <text evidence="1">Bidirectionally degrades single-stranded DNA into large acid-insoluble oligonucleotides, which are then degraded further into small acid-soluble oligonucleotides.</text>
</comment>
<comment type="catalytic activity">
    <reaction evidence="1">
        <text>Exonucleolytic cleavage in either 5'- to 3'- or 3'- to 5'-direction to yield nucleoside 5'-phosphates.</text>
        <dbReference type="EC" id="3.1.11.6"/>
    </reaction>
</comment>
<comment type="subunit">
    <text evidence="1">Heterooligomer composed of large and small subunits.</text>
</comment>
<comment type="subcellular location">
    <subcellularLocation>
        <location evidence="1">Cytoplasm</location>
    </subcellularLocation>
</comment>
<comment type="similarity">
    <text evidence="1">Belongs to the XseA family.</text>
</comment>
<gene>
    <name evidence="1" type="primary">xseA</name>
    <name type="ordered locus">CPn_1062</name>
    <name type="ordered locus">CP_0787</name>
    <name type="ordered locus">CpB1105</name>
</gene>
<name>EX7L_CHLPN</name>
<proteinExistence type="inferred from homology"/>
<sequence>MSSPPQAVASLTERIKTLLESNFCQIIVKGELSNVSLQPSGHLYFGIKDSQAFLNGAFFHFKSKYYDRKPKDGDAVIIHGKLAVYAPRGQYQIVAHALVYAGEGDLLQKFEETKRRLTAEGYFATEKKKPLPFAPQCIGVITSPTGAVIQDILRVLSRRARNYKILVYPVTVQGNSAAHEISKAIEVMNAENLADVLIIARGGGSIEDLWAFNEEILVKAIHASTIPIVSAVGHETDYTLCDFASDVRAPTPSAAAEIVCKSSEEQVQVFEGYLRHLLSHSRQLLTSKKQQLLPWRRFLDRAEFYTTAQQQLDSIEIAIQKGVQGKIHESKQRYDNISRWLQGDLVSRMTCRLQSLKKMLSQALSHKALSLQVRCHQLKKSLTYPRQIQQASQKLSPWRQQLDTLISRRLHYQKEEYFHKHTRLKHAHNVLEQQLRSHVQKLELLGRRLSRGCELNLQNQKIAYANVKETLATILERRYENSVARYSALKEQLHSLNPKNVLKRGYAMLFDFNENSAMISVDSLQENARVRIQLQDGEAILTVTNIEICKLIKG</sequence>
<accession>Q9Z6J7</accession>
<feature type="chain" id="PRO_0000197836" description="Exodeoxyribonuclease 7 large subunit">
    <location>
        <begin position="1"/>
        <end position="554"/>
    </location>
</feature>
<dbReference type="EC" id="3.1.11.6" evidence="1"/>
<dbReference type="EMBL" id="AE001363">
    <property type="protein sequence ID" value="AAD19199.1"/>
    <property type="molecule type" value="Genomic_DNA"/>
</dbReference>
<dbReference type="EMBL" id="AE002161">
    <property type="protein sequence ID" value="AAF38586.1"/>
    <property type="molecule type" value="Genomic_DNA"/>
</dbReference>
<dbReference type="EMBL" id="BA000008">
    <property type="protein sequence ID" value="BAA99269.1"/>
    <property type="molecule type" value="Genomic_DNA"/>
</dbReference>
<dbReference type="EMBL" id="AE009440">
    <property type="protein sequence ID" value="AAP99033.1"/>
    <property type="molecule type" value="Genomic_DNA"/>
</dbReference>
<dbReference type="PIR" id="C72002">
    <property type="entry name" value="C72002"/>
</dbReference>
<dbReference type="PIR" id="C86623">
    <property type="entry name" value="C86623"/>
</dbReference>
<dbReference type="RefSeq" id="NP_225256.1">
    <property type="nucleotide sequence ID" value="NC_000922.1"/>
</dbReference>
<dbReference type="RefSeq" id="WP_010883695.1">
    <property type="nucleotide sequence ID" value="NZ_LN847257.1"/>
</dbReference>
<dbReference type="SMR" id="Q9Z6J7"/>
<dbReference type="STRING" id="406984.CPK_ORF00487"/>
<dbReference type="GeneID" id="45051121"/>
<dbReference type="KEGG" id="cpa:CP_0787"/>
<dbReference type="KEGG" id="cpj:xseA"/>
<dbReference type="KEGG" id="cpn:CPn_1062"/>
<dbReference type="KEGG" id="cpt:CpB1105"/>
<dbReference type="PATRIC" id="fig|115713.3.peg.1162"/>
<dbReference type="eggNOG" id="COG1570">
    <property type="taxonomic scope" value="Bacteria"/>
</dbReference>
<dbReference type="HOGENOM" id="CLU_023625_5_0_0"/>
<dbReference type="OMA" id="IVCQSSE"/>
<dbReference type="OrthoDB" id="9802795at2"/>
<dbReference type="Proteomes" id="UP000000583">
    <property type="component" value="Chromosome"/>
</dbReference>
<dbReference type="Proteomes" id="UP000000801">
    <property type="component" value="Chromosome"/>
</dbReference>
<dbReference type="GO" id="GO:0005737">
    <property type="term" value="C:cytoplasm"/>
    <property type="evidence" value="ECO:0007669"/>
    <property type="project" value="UniProtKB-SubCell"/>
</dbReference>
<dbReference type="GO" id="GO:0009318">
    <property type="term" value="C:exodeoxyribonuclease VII complex"/>
    <property type="evidence" value="ECO:0007669"/>
    <property type="project" value="InterPro"/>
</dbReference>
<dbReference type="GO" id="GO:0008855">
    <property type="term" value="F:exodeoxyribonuclease VII activity"/>
    <property type="evidence" value="ECO:0007669"/>
    <property type="project" value="UniProtKB-UniRule"/>
</dbReference>
<dbReference type="GO" id="GO:0003676">
    <property type="term" value="F:nucleic acid binding"/>
    <property type="evidence" value="ECO:0007669"/>
    <property type="project" value="InterPro"/>
</dbReference>
<dbReference type="GO" id="GO:0006308">
    <property type="term" value="P:DNA catabolic process"/>
    <property type="evidence" value="ECO:0007669"/>
    <property type="project" value="UniProtKB-UniRule"/>
</dbReference>
<dbReference type="CDD" id="cd04489">
    <property type="entry name" value="ExoVII_LU_OBF"/>
    <property type="match status" value="1"/>
</dbReference>
<dbReference type="HAMAP" id="MF_00378">
    <property type="entry name" value="Exonuc_7_L"/>
    <property type="match status" value="1"/>
</dbReference>
<dbReference type="InterPro" id="IPR003753">
    <property type="entry name" value="Exonuc_VII_L"/>
</dbReference>
<dbReference type="InterPro" id="IPR020579">
    <property type="entry name" value="Exonuc_VII_lsu_C"/>
</dbReference>
<dbReference type="InterPro" id="IPR025824">
    <property type="entry name" value="OB-fold_nuc-bd_dom"/>
</dbReference>
<dbReference type="NCBIfam" id="TIGR00237">
    <property type="entry name" value="xseA"/>
    <property type="match status" value="1"/>
</dbReference>
<dbReference type="PANTHER" id="PTHR30008">
    <property type="entry name" value="EXODEOXYRIBONUCLEASE 7 LARGE SUBUNIT"/>
    <property type="match status" value="1"/>
</dbReference>
<dbReference type="PANTHER" id="PTHR30008:SF0">
    <property type="entry name" value="EXODEOXYRIBONUCLEASE 7 LARGE SUBUNIT"/>
    <property type="match status" value="1"/>
</dbReference>
<dbReference type="Pfam" id="PF02601">
    <property type="entry name" value="Exonuc_VII_L"/>
    <property type="match status" value="2"/>
</dbReference>
<dbReference type="Pfam" id="PF13742">
    <property type="entry name" value="tRNA_anti_2"/>
    <property type="match status" value="1"/>
</dbReference>
<evidence type="ECO:0000255" key="1">
    <source>
        <dbReference type="HAMAP-Rule" id="MF_00378"/>
    </source>
</evidence>